<evidence type="ECO:0000255" key="1">
    <source>
        <dbReference type="HAMAP-Rule" id="MF_00176"/>
    </source>
</evidence>
<organism>
    <name type="scientific">Acidovorax ebreus (strain TPSY)</name>
    <name type="common">Diaphorobacter sp. (strain TPSY)</name>
    <dbReference type="NCBI Taxonomy" id="535289"/>
    <lineage>
        <taxon>Bacteria</taxon>
        <taxon>Pseudomonadati</taxon>
        <taxon>Pseudomonadota</taxon>
        <taxon>Betaproteobacteria</taxon>
        <taxon>Burkholderiales</taxon>
        <taxon>Comamonadaceae</taxon>
        <taxon>Diaphorobacter</taxon>
    </lineage>
</organism>
<gene>
    <name evidence="1" type="primary">serS</name>
    <name type="ordered locus">Dtpsy_2772</name>
</gene>
<protein>
    <recommendedName>
        <fullName evidence="1">Serine--tRNA ligase</fullName>
        <ecNumber evidence="1">6.1.1.11</ecNumber>
    </recommendedName>
    <alternativeName>
        <fullName evidence="1">Seryl-tRNA synthetase</fullName>
        <shortName evidence="1">SerRS</shortName>
    </alternativeName>
    <alternativeName>
        <fullName evidence="1">Seryl-tRNA(Ser/Sec) synthetase</fullName>
    </alternativeName>
</protein>
<feature type="chain" id="PRO_1000199474" description="Serine--tRNA ligase">
    <location>
        <begin position="1"/>
        <end position="442"/>
    </location>
</feature>
<feature type="binding site" evidence="1">
    <location>
        <begin position="249"/>
        <end position="251"/>
    </location>
    <ligand>
        <name>L-serine</name>
        <dbReference type="ChEBI" id="CHEBI:33384"/>
    </ligand>
</feature>
<feature type="binding site" evidence="1">
    <location>
        <begin position="280"/>
        <end position="282"/>
    </location>
    <ligand>
        <name>ATP</name>
        <dbReference type="ChEBI" id="CHEBI:30616"/>
    </ligand>
</feature>
<feature type="binding site" evidence="1">
    <location>
        <position position="303"/>
    </location>
    <ligand>
        <name>L-serine</name>
        <dbReference type="ChEBI" id="CHEBI:33384"/>
    </ligand>
</feature>
<feature type="binding site" evidence="1">
    <location>
        <begin position="367"/>
        <end position="370"/>
    </location>
    <ligand>
        <name>ATP</name>
        <dbReference type="ChEBI" id="CHEBI:30616"/>
    </ligand>
</feature>
<feature type="binding site" evidence="1">
    <location>
        <position position="402"/>
    </location>
    <ligand>
        <name>L-serine</name>
        <dbReference type="ChEBI" id="CHEBI:33384"/>
    </ligand>
</feature>
<keyword id="KW-0030">Aminoacyl-tRNA synthetase</keyword>
<keyword id="KW-0067">ATP-binding</keyword>
<keyword id="KW-0963">Cytoplasm</keyword>
<keyword id="KW-0436">Ligase</keyword>
<keyword id="KW-0547">Nucleotide-binding</keyword>
<keyword id="KW-0648">Protein biosynthesis</keyword>
<keyword id="KW-1185">Reference proteome</keyword>
<accession>B9MEG7</accession>
<comment type="function">
    <text evidence="1">Catalyzes the attachment of serine to tRNA(Ser). Is also able to aminoacylate tRNA(Sec) with serine, to form the misacylated tRNA L-seryl-tRNA(Sec), which will be further converted into selenocysteinyl-tRNA(Sec).</text>
</comment>
<comment type="catalytic activity">
    <reaction evidence="1">
        <text>tRNA(Ser) + L-serine + ATP = L-seryl-tRNA(Ser) + AMP + diphosphate + H(+)</text>
        <dbReference type="Rhea" id="RHEA:12292"/>
        <dbReference type="Rhea" id="RHEA-COMP:9669"/>
        <dbReference type="Rhea" id="RHEA-COMP:9703"/>
        <dbReference type="ChEBI" id="CHEBI:15378"/>
        <dbReference type="ChEBI" id="CHEBI:30616"/>
        <dbReference type="ChEBI" id="CHEBI:33019"/>
        <dbReference type="ChEBI" id="CHEBI:33384"/>
        <dbReference type="ChEBI" id="CHEBI:78442"/>
        <dbReference type="ChEBI" id="CHEBI:78533"/>
        <dbReference type="ChEBI" id="CHEBI:456215"/>
        <dbReference type="EC" id="6.1.1.11"/>
    </reaction>
</comment>
<comment type="catalytic activity">
    <reaction evidence="1">
        <text>tRNA(Sec) + L-serine + ATP = L-seryl-tRNA(Sec) + AMP + diphosphate + H(+)</text>
        <dbReference type="Rhea" id="RHEA:42580"/>
        <dbReference type="Rhea" id="RHEA-COMP:9742"/>
        <dbReference type="Rhea" id="RHEA-COMP:10128"/>
        <dbReference type="ChEBI" id="CHEBI:15378"/>
        <dbReference type="ChEBI" id="CHEBI:30616"/>
        <dbReference type="ChEBI" id="CHEBI:33019"/>
        <dbReference type="ChEBI" id="CHEBI:33384"/>
        <dbReference type="ChEBI" id="CHEBI:78442"/>
        <dbReference type="ChEBI" id="CHEBI:78533"/>
        <dbReference type="ChEBI" id="CHEBI:456215"/>
        <dbReference type="EC" id="6.1.1.11"/>
    </reaction>
</comment>
<comment type="pathway">
    <text evidence="1">Aminoacyl-tRNA biosynthesis; selenocysteinyl-tRNA(Sec) biosynthesis; L-seryl-tRNA(Sec) from L-serine and tRNA(Sec): step 1/1.</text>
</comment>
<comment type="subunit">
    <text evidence="1">Homodimer. The tRNA molecule binds across the dimer.</text>
</comment>
<comment type="subcellular location">
    <subcellularLocation>
        <location evidence="1">Cytoplasm</location>
    </subcellularLocation>
</comment>
<comment type="domain">
    <text evidence="1">Consists of two distinct domains, a catalytic core and a N-terminal extension that is involved in tRNA binding.</text>
</comment>
<comment type="similarity">
    <text evidence="1">Belongs to the class-II aminoacyl-tRNA synthetase family. Type-1 seryl-tRNA synthetase subfamily.</text>
</comment>
<name>SYS_ACIET</name>
<proteinExistence type="inferred from homology"/>
<reference key="1">
    <citation type="submission" date="2009-01" db="EMBL/GenBank/DDBJ databases">
        <title>Complete sequence of Diaphorobacter sp. TPSY.</title>
        <authorList>
            <consortium name="US DOE Joint Genome Institute"/>
            <person name="Lucas S."/>
            <person name="Copeland A."/>
            <person name="Lapidus A."/>
            <person name="Glavina del Rio T."/>
            <person name="Tice H."/>
            <person name="Bruce D."/>
            <person name="Goodwin L."/>
            <person name="Pitluck S."/>
            <person name="Chertkov O."/>
            <person name="Brettin T."/>
            <person name="Detter J.C."/>
            <person name="Han C."/>
            <person name="Larimer F."/>
            <person name="Land M."/>
            <person name="Hauser L."/>
            <person name="Kyrpides N."/>
            <person name="Mikhailova N."/>
            <person name="Coates J.D."/>
        </authorList>
    </citation>
    <scope>NUCLEOTIDE SEQUENCE [LARGE SCALE GENOMIC DNA]</scope>
    <source>
        <strain>TPSY</strain>
    </source>
</reference>
<dbReference type="EC" id="6.1.1.11" evidence="1"/>
<dbReference type="EMBL" id="CP001392">
    <property type="protein sequence ID" value="ACM34206.1"/>
    <property type="molecule type" value="Genomic_DNA"/>
</dbReference>
<dbReference type="RefSeq" id="WP_015914091.1">
    <property type="nucleotide sequence ID" value="NC_011992.1"/>
</dbReference>
<dbReference type="SMR" id="B9MEG7"/>
<dbReference type="KEGG" id="dia:Dtpsy_2772"/>
<dbReference type="eggNOG" id="COG0172">
    <property type="taxonomic scope" value="Bacteria"/>
</dbReference>
<dbReference type="HOGENOM" id="CLU_023797_0_1_4"/>
<dbReference type="UniPathway" id="UPA00906">
    <property type="reaction ID" value="UER00895"/>
</dbReference>
<dbReference type="Proteomes" id="UP000000450">
    <property type="component" value="Chromosome"/>
</dbReference>
<dbReference type="GO" id="GO:0005737">
    <property type="term" value="C:cytoplasm"/>
    <property type="evidence" value="ECO:0007669"/>
    <property type="project" value="UniProtKB-SubCell"/>
</dbReference>
<dbReference type="GO" id="GO:0005524">
    <property type="term" value="F:ATP binding"/>
    <property type="evidence" value="ECO:0007669"/>
    <property type="project" value="UniProtKB-UniRule"/>
</dbReference>
<dbReference type="GO" id="GO:0004828">
    <property type="term" value="F:serine-tRNA ligase activity"/>
    <property type="evidence" value="ECO:0007669"/>
    <property type="project" value="UniProtKB-UniRule"/>
</dbReference>
<dbReference type="GO" id="GO:0016260">
    <property type="term" value="P:selenocysteine biosynthetic process"/>
    <property type="evidence" value="ECO:0007669"/>
    <property type="project" value="UniProtKB-UniRule"/>
</dbReference>
<dbReference type="GO" id="GO:0006434">
    <property type="term" value="P:seryl-tRNA aminoacylation"/>
    <property type="evidence" value="ECO:0007669"/>
    <property type="project" value="UniProtKB-UniRule"/>
</dbReference>
<dbReference type="CDD" id="cd00770">
    <property type="entry name" value="SerRS_core"/>
    <property type="match status" value="1"/>
</dbReference>
<dbReference type="Gene3D" id="3.30.930.10">
    <property type="entry name" value="Bira Bifunctional Protein, Domain 2"/>
    <property type="match status" value="1"/>
</dbReference>
<dbReference type="Gene3D" id="1.10.287.40">
    <property type="entry name" value="Serine-tRNA synthetase, tRNA binding domain"/>
    <property type="match status" value="1"/>
</dbReference>
<dbReference type="HAMAP" id="MF_00176">
    <property type="entry name" value="Ser_tRNA_synth_type1"/>
    <property type="match status" value="1"/>
</dbReference>
<dbReference type="InterPro" id="IPR002314">
    <property type="entry name" value="aa-tRNA-synt_IIb"/>
</dbReference>
<dbReference type="InterPro" id="IPR006195">
    <property type="entry name" value="aa-tRNA-synth_II"/>
</dbReference>
<dbReference type="InterPro" id="IPR045864">
    <property type="entry name" value="aa-tRNA-synth_II/BPL/LPL"/>
</dbReference>
<dbReference type="InterPro" id="IPR002317">
    <property type="entry name" value="Ser-tRNA-ligase_type_1"/>
</dbReference>
<dbReference type="InterPro" id="IPR015866">
    <property type="entry name" value="Ser-tRNA-synth_1_N"/>
</dbReference>
<dbReference type="InterPro" id="IPR042103">
    <property type="entry name" value="SerRS_1_N_sf"/>
</dbReference>
<dbReference type="InterPro" id="IPR033729">
    <property type="entry name" value="SerRS_core"/>
</dbReference>
<dbReference type="InterPro" id="IPR010978">
    <property type="entry name" value="tRNA-bd_arm"/>
</dbReference>
<dbReference type="NCBIfam" id="TIGR00414">
    <property type="entry name" value="serS"/>
    <property type="match status" value="1"/>
</dbReference>
<dbReference type="PANTHER" id="PTHR43697:SF1">
    <property type="entry name" value="SERINE--TRNA LIGASE"/>
    <property type="match status" value="1"/>
</dbReference>
<dbReference type="PANTHER" id="PTHR43697">
    <property type="entry name" value="SERYL-TRNA SYNTHETASE"/>
    <property type="match status" value="1"/>
</dbReference>
<dbReference type="Pfam" id="PF02403">
    <property type="entry name" value="Seryl_tRNA_N"/>
    <property type="match status" value="1"/>
</dbReference>
<dbReference type="Pfam" id="PF00587">
    <property type="entry name" value="tRNA-synt_2b"/>
    <property type="match status" value="1"/>
</dbReference>
<dbReference type="PIRSF" id="PIRSF001529">
    <property type="entry name" value="Ser-tRNA-synth_IIa"/>
    <property type="match status" value="1"/>
</dbReference>
<dbReference type="PRINTS" id="PR00981">
    <property type="entry name" value="TRNASYNTHSER"/>
</dbReference>
<dbReference type="SUPFAM" id="SSF55681">
    <property type="entry name" value="Class II aaRS and biotin synthetases"/>
    <property type="match status" value="1"/>
</dbReference>
<dbReference type="SUPFAM" id="SSF46589">
    <property type="entry name" value="tRNA-binding arm"/>
    <property type="match status" value="1"/>
</dbReference>
<dbReference type="PROSITE" id="PS50862">
    <property type="entry name" value="AA_TRNA_LIGASE_II"/>
    <property type="match status" value="1"/>
</dbReference>
<sequence length="442" mass="48693">MLDILLLRKDLASAVARLETRKKPQAFLNVEAFQALESERKTIQMRTEELQSQRNQLSKQIGMLMGKGEKDAAEAAKAQVAAIKAELDGSATRLDQIQGELQSMLAAVPNLPHESVPVGSDESANVEVRRWSPDGPQPRSLGFTPKDHVDLGEPLGLDFDMGVKLSGSRFTVMKGGIARLHRALAQFMLDVQTQEHGYTECYVPYVVNADSLKGTGQLPKFEGDLFAAQKGGQDAEPVPDNAQLYLIPTSEVPLTNFVRDEVLAEAQLPLKLTAHTPCFRSEAGSYGRDTRGMIRQHQFDKVEMVQIVHPDKSYEALEEMTRHAEAVLQKLGLPYRVMSLCTGDMGFGAAKTYDLEVWLPAQNTYREISSVSNCEAFQARRLQARFKNAQGKNELVHTLNGSGLAVGRTLVAVLENYQNEDGSVTIPEVLRPYMGGQATLPV</sequence>